<accession>Q8E8N6</accession>
<proteinExistence type="inferred from homology"/>
<gene>
    <name evidence="1" type="primary">bioH</name>
    <name type="ordered locus">SO_4626</name>
</gene>
<dbReference type="EC" id="3.1.1.85" evidence="1"/>
<dbReference type="EMBL" id="AE014299">
    <property type="protein sequence ID" value="AAN57586.2"/>
    <property type="molecule type" value="Genomic_DNA"/>
</dbReference>
<dbReference type="RefSeq" id="NP_720142.2">
    <property type="nucleotide sequence ID" value="NC_004347.2"/>
</dbReference>
<dbReference type="RefSeq" id="WP_011074222.1">
    <property type="nucleotide sequence ID" value="NC_004347.2"/>
</dbReference>
<dbReference type="SMR" id="Q8E8N6"/>
<dbReference type="STRING" id="211586.SO_4626"/>
<dbReference type="ESTHER" id="sheon-BIOH">
    <property type="family name" value="BioH"/>
</dbReference>
<dbReference type="PaxDb" id="211586-SO_4626"/>
<dbReference type="KEGG" id="son:SO_4626"/>
<dbReference type="PATRIC" id="fig|211586.12.peg.4483"/>
<dbReference type="eggNOG" id="COG0596">
    <property type="taxonomic scope" value="Bacteria"/>
</dbReference>
<dbReference type="HOGENOM" id="CLU_020336_12_2_6"/>
<dbReference type="OrthoDB" id="9780744at2"/>
<dbReference type="PhylomeDB" id="Q8E8N6"/>
<dbReference type="BioCyc" id="SONE211586:G1GMP-4275-MONOMER"/>
<dbReference type="UniPathway" id="UPA00078"/>
<dbReference type="Proteomes" id="UP000008186">
    <property type="component" value="Chromosome"/>
</dbReference>
<dbReference type="GO" id="GO:0005737">
    <property type="term" value="C:cytoplasm"/>
    <property type="evidence" value="ECO:0007669"/>
    <property type="project" value="UniProtKB-SubCell"/>
</dbReference>
<dbReference type="GO" id="GO:0016020">
    <property type="term" value="C:membrane"/>
    <property type="evidence" value="ECO:0000318"/>
    <property type="project" value="GO_Central"/>
</dbReference>
<dbReference type="GO" id="GO:0090499">
    <property type="term" value="F:pimelyl-[acyl-carrier protein] methyl ester esterase activity"/>
    <property type="evidence" value="ECO:0007669"/>
    <property type="project" value="UniProtKB-EC"/>
</dbReference>
<dbReference type="GO" id="GO:0009102">
    <property type="term" value="P:biotin biosynthetic process"/>
    <property type="evidence" value="ECO:0007669"/>
    <property type="project" value="UniProtKB-UniRule"/>
</dbReference>
<dbReference type="Gene3D" id="3.40.50.1820">
    <property type="entry name" value="alpha/beta hydrolase"/>
    <property type="match status" value="1"/>
</dbReference>
<dbReference type="HAMAP" id="MF_01260">
    <property type="entry name" value="Carboxylester"/>
    <property type="match status" value="1"/>
</dbReference>
<dbReference type="InterPro" id="IPR000073">
    <property type="entry name" value="AB_hydrolase_1"/>
</dbReference>
<dbReference type="InterPro" id="IPR029058">
    <property type="entry name" value="AB_hydrolase_fold"/>
</dbReference>
<dbReference type="InterPro" id="IPR050266">
    <property type="entry name" value="AB_hydrolase_sf"/>
</dbReference>
<dbReference type="InterPro" id="IPR010076">
    <property type="entry name" value="BioH"/>
</dbReference>
<dbReference type="NCBIfam" id="TIGR01738">
    <property type="entry name" value="bioH"/>
    <property type="match status" value="1"/>
</dbReference>
<dbReference type="PANTHER" id="PTHR43798:SF31">
    <property type="entry name" value="AB HYDROLASE SUPERFAMILY PROTEIN YCLE"/>
    <property type="match status" value="1"/>
</dbReference>
<dbReference type="PANTHER" id="PTHR43798">
    <property type="entry name" value="MONOACYLGLYCEROL LIPASE"/>
    <property type="match status" value="1"/>
</dbReference>
<dbReference type="Pfam" id="PF00561">
    <property type="entry name" value="Abhydrolase_1"/>
    <property type="match status" value="1"/>
</dbReference>
<dbReference type="SUPFAM" id="SSF53474">
    <property type="entry name" value="alpha/beta-Hydrolases"/>
    <property type="match status" value="1"/>
</dbReference>
<evidence type="ECO:0000255" key="1">
    <source>
        <dbReference type="HAMAP-Rule" id="MF_01260"/>
    </source>
</evidence>
<reference key="1">
    <citation type="journal article" date="2002" name="Nat. Biotechnol.">
        <title>Genome sequence of the dissimilatory metal ion-reducing bacterium Shewanella oneidensis.</title>
        <authorList>
            <person name="Heidelberg J.F."/>
            <person name="Paulsen I.T."/>
            <person name="Nelson K.E."/>
            <person name="Gaidos E.J."/>
            <person name="Nelson W.C."/>
            <person name="Read T.D."/>
            <person name="Eisen J.A."/>
            <person name="Seshadri R."/>
            <person name="Ward N.L."/>
            <person name="Methe B.A."/>
            <person name="Clayton R.A."/>
            <person name="Meyer T."/>
            <person name="Tsapin A."/>
            <person name="Scott J."/>
            <person name="Beanan M.J."/>
            <person name="Brinkac L.M."/>
            <person name="Daugherty S.C."/>
            <person name="DeBoy R.T."/>
            <person name="Dodson R.J."/>
            <person name="Durkin A.S."/>
            <person name="Haft D.H."/>
            <person name="Kolonay J.F."/>
            <person name="Madupu R."/>
            <person name="Peterson J.D."/>
            <person name="Umayam L.A."/>
            <person name="White O."/>
            <person name="Wolf A.M."/>
            <person name="Vamathevan J.J."/>
            <person name="Weidman J.F."/>
            <person name="Impraim M."/>
            <person name="Lee K."/>
            <person name="Berry K.J."/>
            <person name="Lee C."/>
            <person name="Mueller J."/>
            <person name="Khouri H.M."/>
            <person name="Gill J."/>
            <person name="Utterback T.R."/>
            <person name="McDonald L.A."/>
            <person name="Feldblyum T.V."/>
            <person name="Smith H.O."/>
            <person name="Venter J.C."/>
            <person name="Nealson K.H."/>
            <person name="Fraser C.M."/>
        </authorList>
    </citation>
    <scope>NUCLEOTIDE SEQUENCE [LARGE SCALE GENOMIC DNA]</scope>
    <source>
        <strain>ATCC 700550 / JCM 31522 / CIP 106686 / LMG 19005 / NCIMB 14063 / MR-1</strain>
    </source>
</reference>
<comment type="function">
    <text evidence="1">The physiological role of BioH is to remove the methyl group introduced by BioC when the pimeloyl moiety is complete. It allows to synthesize pimeloyl-ACP via the fatty acid synthetic pathway through the hydrolysis of the ester bonds of pimeloyl-ACP esters.</text>
</comment>
<comment type="catalytic activity">
    <reaction evidence="1">
        <text>6-carboxyhexanoyl-[ACP] methyl ester + H2O = 6-carboxyhexanoyl-[ACP] + methanol + H(+)</text>
        <dbReference type="Rhea" id="RHEA:42700"/>
        <dbReference type="Rhea" id="RHEA-COMP:9955"/>
        <dbReference type="Rhea" id="RHEA-COMP:10186"/>
        <dbReference type="ChEBI" id="CHEBI:15377"/>
        <dbReference type="ChEBI" id="CHEBI:15378"/>
        <dbReference type="ChEBI" id="CHEBI:17790"/>
        <dbReference type="ChEBI" id="CHEBI:78846"/>
        <dbReference type="ChEBI" id="CHEBI:82735"/>
        <dbReference type="EC" id="3.1.1.85"/>
    </reaction>
</comment>
<comment type="pathway">
    <text evidence="1">Cofactor biosynthesis; biotin biosynthesis.</text>
</comment>
<comment type="subunit">
    <text evidence="1">Monomer.</text>
</comment>
<comment type="subcellular location">
    <subcellularLocation>
        <location evidence="1">Cytoplasm</location>
    </subcellularLocation>
</comment>
<comment type="similarity">
    <text evidence="1">Belongs to the AB hydrolase superfamily. Carboxylesterase BioH family.</text>
</comment>
<protein>
    <recommendedName>
        <fullName evidence="1">Pimeloyl-[acyl-carrier protein] methyl ester esterase</fullName>
        <ecNumber evidence="1">3.1.1.85</ecNumber>
    </recommendedName>
    <alternativeName>
        <fullName evidence="1">Biotin synthesis protein BioH</fullName>
    </alternativeName>
    <alternativeName>
        <fullName evidence="1">Carboxylesterase BioH</fullName>
    </alternativeName>
</protein>
<keyword id="KW-0093">Biotin biosynthesis</keyword>
<keyword id="KW-0963">Cytoplasm</keyword>
<keyword id="KW-0378">Hydrolase</keyword>
<keyword id="KW-1185">Reference proteome</keyword>
<keyword id="KW-0719">Serine esterase</keyword>
<organism>
    <name type="scientific">Shewanella oneidensis (strain ATCC 700550 / JCM 31522 / CIP 106686 / LMG 19005 / NCIMB 14063 / MR-1)</name>
    <dbReference type="NCBI Taxonomy" id="211586"/>
    <lineage>
        <taxon>Bacteria</taxon>
        <taxon>Pseudomonadati</taxon>
        <taxon>Pseudomonadota</taxon>
        <taxon>Gammaproteobacteria</taxon>
        <taxon>Alteromonadales</taxon>
        <taxon>Shewanellaceae</taxon>
        <taxon>Shewanella</taxon>
    </lineage>
</organism>
<name>BIOH_SHEON</name>
<sequence>MNATTSAHHPLHIETIGQGPDLVVIHGWGVNSAVFTPLHEQLSEYRVHYVDLPGFGLSQPIAGNLSTWIDALINNLPTNAIWAGWSLGGLVATQAAIDYPSHIKGLITIASSPCFMAREEEAWPGIPPQVLSMFGEQLGQNLPKTIERFLAIQAMGSETAKEDIKQLRDLVLARPLPDAAALTQGLDMLNQIDLRMQLSSISQPWLRIWGRLDGLVPKRVQPQMPTASHITDVMLAKASHAPFVSHRQEFLQALLPWLTQFKD</sequence>
<feature type="chain" id="PRO_0000204493" description="Pimeloyl-[acyl-carrier protein] methyl ester esterase">
    <location>
        <begin position="1"/>
        <end position="263"/>
    </location>
</feature>
<feature type="active site" description="Nucleophile" evidence="1">
    <location>
        <position position="86"/>
    </location>
</feature>
<feature type="active site" evidence="1">
    <location>
        <position position="213"/>
    </location>
</feature>
<feature type="active site" evidence="1">
    <location>
        <position position="240"/>
    </location>
</feature>
<feature type="binding site" evidence="1">
    <location>
        <position position="28"/>
    </location>
    <ligand>
        <name>substrate</name>
    </ligand>
</feature>
<feature type="binding site" evidence="1">
    <location>
        <begin position="86"/>
        <end position="87"/>
    </location>
    <ligand>
        <name>substrate</name>
    </ligand>
</feature>
<feature type="binding site" evidence="1">
    <location>
        <begin position="149"/>
        <end position="153"/>
    </location>
    <ligand>
        <name>substrate</name>
    </ligand>
</feature>
<feature type="binding site" evidence="1">
    <location>
        <position position="240"/>
    </location>
    <ligand>
        <name>substrate</name>
    </ligand>
</feature>